<comment type="function">
    <text evidence="3 4 8">Aerial growth, conidiation, and dispersal of filamentous fungi in the environment rely upon a capability of their secreting small amphipathic proteins called hydrophobins (HPBs) with low sequence identity. Class I can self-assemble into an outermost layer of rodlet bundles on aerial cell surfaces, conferring cellular hydrophobicity that supports fungal growth, development and dispersal; whereas Class II form highly ordered films at water-air interfaces through intermolecular interactions but contribute nothing to the rodlet structure (Probable). In P.expansum, hydrophobins contribute to germination, tolerance to cold stress and mycotoxins patulin and citrinin production (PubMed:36374077). HfbC is involved in the virulence on apple (PubMed:30047230).</text>
</comment>
<comment type="subcellular location">
    <subcellularLocation>
        <location evidence="8">Secreted</location>
    </subcellularLocation>
    <subcellularLocation>
        <location evidence="8">Secreted</location>
        <location evidence="8">Cell wall</location>
    </subcellularLocation>
</comment>
<comment type="disruption phenotype">
    <text evidence="4">Affects hydrophobicity only when HfbD, HfbE and HfbF are also deleted (PubMed:36374077). Disruption of all 7 hydrophobins leads to altered germination kinetics, decreased survival under exposure to extreme cold stress and increased mycotoxins patulin and citrinin production (PubMed:36374077).</text>
</comment>
<comment type="similarity">
    <text evidence="7">Belongs to the fungal hydrophobin family.</text>
</comment>
<protein>
    <recommendedName>
        <fullName evidence="5">Class I hydrophobin C</fullName>
    </recommendedName>
</protein>
<gene>
    <name evidence="6" type="primary">HfbC</name>
    <name type="ORF">PEX2_011640</name>
</gene>
<reference key="1">
    <citation type="journal article" date="2015" name="Mol. Plant Microbe Interact.">
        <title>Genome, transcriptome, and functional analyses of Penicillium expansum provide new insights into secondary metabolism and pathogenicity.</title>
        <authorList>
            <person name="Ballester A.R."/>
            <person name="Marcet-Houben M."/>
            <person name="Levin E."/>
            <person name="Sela N."/>
            <person name="Selma-Lazaro C."/>
            <person name="Carmona L."/>
            <person name="Wisniewski M."/>
            <person name="Droby S."/>
            <person name="Gonzalez-Candelas L."/>
            <person name="Gabaldon T."/>
        </authorList>
    </citation>
    <scope>NUCLEOTIDE SEQUENCE [LARGE SCALE GENOMIC DNA]</scope>
    <source>
        <strain>MD-8</strain>
    </source>
</reference>
<reference key="2">
    <citation type="journal article" date="2018" name="Mol. Plant Pathol.">
        <title>Fungal attack and host defence pathways unveiled in near-avirulent interactions of Penicillium expansum creA mutants on apples.</title>
        <authorList>
            <person name="Tannous J."/>
            <person name="Kumar D."/>
            <person name="Sela N."/>
            <person name="Sionov E."/>
            <person name="Prusky D."/>
            <person name="Keller N.P."/>
        </authorList>
    </citation>
    <scope>FUNCTION</scope>
</reference>
<reference key="3">
    <citation type="journal article" date="2022" name="MBio">
        <title>The Hydrophobin Gene Family Confers a Fitness Trade-off between Spore Dispersal and Host Colonization in Penicillium expansum.</title>
        <authorList>
            <person name="Luciano-Rosario D."/>
            <person name="Eagan J.L."/>
            <person name="Aryal N."/>
            <person name="Dominguez E.G."/>
            <person name="Hull C.M."/>
            <person name="Keller N.P."/>
        </authorList>
    </citation>
    <scope>FUNCTION</scope>
    <scope>DISRUPTION PHENOTYPE</scope>
</reference>
<accession>A0A0A2IC94</accession>
<sequence length="140" mass="14042">MKFFVPAFLFAATAMALPGSGSAAGVAPHSNNEVEDAVNKCGDGAHMSCCNKINKNEGISQNNIGVLSNVLGAIGSEGLGLGQGCTQLDIPISVLGAAGLTDFLKKNCQQNIACCQNSNSQANGNLVGVAAPCVSFGGLL</sequence>
<evidence type="ECO:0000250" key="1">
    <source>
        <dbReference type="UniProtKB" id="P52754"/>
    </source>
</evidence>
<evidence type="ECO:0000255" key="2"/>
<evidence type="ECO:0000269" key="3">
    <source>
    </source>
</evidence>
<evidence type="ECO:0000269" key="4">
    <source>
    </source>
</evidence>
<evidence type="ECO:0000303" key="5">
    <source>
    </source>
</evidence>
<evidence type="ECO:0000303" key="6">
    <source>
    </source>
</evidence>
<evidence type="ECO:0000305" key="7"/>
<evidence type="ECO:0000305" key="8">
    <source>
    </source>
</evidence>
<proteinExistence type="inferred from homology"/>
<dbReference type="EMBL" id="JQFZ01000002">
    <property type="protein sequence ID" value="KGO63375.1"/>
    <property type="molecule type" value="Genomic_DNA"/>
</dbReference>
<dbReference type="RefSeq" id="XP_016603795.1">
    <property type="nucleotide sequence ID" value="XM_016738441.1"/>
</dbReference>
<dbReference type="STRING" id="27334.A0A0A2IC94"/>
<dbReference type="GeneID" id="27673860"/>
<dbReference type="VEuPathDB" id="FungiDB:PEXP_071760"/>
<dbReference type="HOGENOM" id="CLU_106380_0_0_1"/>
<dbReference type="OrthoDB" id="4225815at2759"/>
<dbReference type="PhylomeDB" id="A0A0A2IC94"/>
<dbReference type="Proteomes" id="UP000030143">
    <property type="component" value="Unassembled WGS sequence"/>
</dbReference>
<dbReference type="GO" id="GO:0005576">
    <property type="term" value="C:extracellular region"/>
    <property type="evidence" value="ECO:0007669"/>
    <property type="project" value="UniProtKB-KW"/>
</dbReference>
<dbReference type="GO" id="GO:0009277">
    <property type="term" value="C:fungal-type cell wall"/>
    <property type="evidence" value="ECO:0007669"/>
    <property type="project" value="InterPro"/>
</dbReference>
<dbReference type="GO" id="GO:0005199">
    <property type="term" value="F:structural constituent of cell wall"/>
    <property type="evidence" value="ECO:0007669"/>
    <property type="project" value="InterPro"/>
</dbReference>
<dbReference type="InterPro" id="IPR001338">
    <property type="entry name" value="Hydrophobin"/>
</dbReference>
<dbReference type="Pfam" id="PF01185">
    <property type="entry name" value="Hydrophobin"/>
    <property type="match status" value="1"/>
</dbReference>
<dbReference type="SMART" id="SM00075">
    <property type="entry name" value="HYDRO"/>
    <property type="match status" value="1"/>
</dbReference>
<keyword id="KW-0134">Cell wall</keyword>
<keyword id="KW-1015">Disulfide bond</keyword>
<keyword id="KW-1185">Reference proteome</keyword>
<keyword id="KW-0964">Secreted</keyword>
<keyword id="KW-0732">Signal</keyword>
<feature type="signal peptide" evidence="2">
    <location>
        <begin position="1"/>
        <end position="23"/>
    </location>
</feature>
<feature type="chain" id="PRO_5013984662" description="Class I hydrophobin C">
    <location>
        <begin position="24"/>
        <end position="140"/>
    </location>
</feature>
<feature type="disulfide bond" evidence="1">
    <location>
        <begin position="41"/>
        <end position="114"/>
    </location>
</feature>
<feature type="disulfide bond" evidence="1">
    <location>
        <begin position="49"/>
        <end position="108"/>
    </location>
</feature>
<feature type="disulfide bond" evidence="1">
    <location>
        <begin position="50"/>
        <end position="85"/>
    </location>
</feature>
<feature type="disulfide bond" evidence="1">
    <location>
        <begin position="115"/>
        <end position="133"/>
    </location>
</feature>
<organism>
    <name type="scientific">Penicillium expansum</name>
    <name type="common">Blue mold rot fungus</name>
    <dbReference type="NCBI Taxonomy" id="27334"/>
    <lineage>
        <taxon>Eukaryota</taxon>
        <taxon>Fungi</taxon>
        <taxon>Dikarya</taxon>
        <taxon>Ascomycota</taxon>
        <taxon>Pezizomycotina</taxon>
        <taxon>Eurotiomycetes</taxon>
        <taxon>Eurotiomycetidae</taxon>
        <taxon>Eurotiales</taxon>
        <taxon>Aspergillaceae</taxon>
        <taxon>Penicillium</taxon>
    </lineage>
</organism>
<name>HFBC_PENEN</name>